<accession>A4G9S6</accession>
<keyword id="KW-1185">Reference proteome</keyword>
<keyword id="KW-0687">Ribonucleoprotein</keyword>
<keyword id="KW-0689">Ribosomal protein</keyword>
<keyword id="KW-0694">RNA-binding</keyword>
<keyword id="KW-0699">rRNA-binding</keyword>
<keyword id="KW-0820">tRNA-binding</keyword>
<feature type="chain" id="PRO_1000052749" description="Large ribosomal subunit protein uL5">
    <location>
        <begin position="1"/>
        <end position="179"/>
    </location>
</feature>
<sequence length="179" mass="20028">MARLQEFYKEKVVGDLTAKFAYKSAMEVPRILKITLNMGLSEAIADKKIIEHAVGDLTKIAGQKPVVTKARKAIAGFKIREGYPIGCMVTLRGAQMYEFLDRFITVALPRVRDFRGISGKAFDGRGNYNIGVKEQIIFPEIEYDKIDALRGMNISITTTAKTDDEAKALLAAFKFPFRN</sequence>
<reference key="1">
    <citation type="journal article" date="2007" name="PLoS Genet.">
        <title>A tale of two oxidation states: bacterial colonization of arsenic-rich environments.</title>
        <authorList>
            <person name="Muller D."/>
            <person name="Medigue C."/>
            <person name="Koechler S."/>
            <person name="Barbe V."/>
            <person name="Barakat M."/>
            <person name="Talla E."/>
            <person name="Bonnefoy V."/>
            <person name="Krin E."/>
            <person name="Arsene-Ploetze F."/>
            <person name="Carapito C."/>
            <person name="Chandler M."/>
            <person name="Cournoyer B."/>
            <person name="Cruveiller S."/>
            <person name="Dossat C."/>
            <person name="Duval S."/>
            <person name="Heymann M."/>
            <person name="Leize E."/>
            <person name="Lieutaud A."/>
            <person name="Lievremont D."/>
            <person name="Makita Y."/>
            <person name="Mangenot S."/>
            <person name="Nitschke W."/>
            <person name="Ortet P."/>
            <person name="Perdrial N."/>
            <person name="Schoepp B."/>
            <person name="Siguier P."/>
            <person name="Simeonova D.D."/>
            <person name="Rouy Z."/>
            <person name="Segurens B."/>
            <person name="Turlin E."/>
            <person name="Vallenet D."/>
            <person name="van Dorsselaer A."/>
            <person name="Weiss S."/>
            <person name="Weissenbach J."/>
            <person name="Lett M.-C."/>
            <person name="Danchin A."/>
            <person name="Bertin P.N."/>
        </authorList>
    </citation>
    <scope>NUCLEOTIDE SEQUENCE [LARGE SCALE GENOMIC DNA]</scope>
    <source>
        <strain>ULPAs1</strain>
    </source>
</reference>
<comment type="function">
    <text evidence="1">This is one of the proteins that bind and probably mediate the attachment of the 5S RNA into the large ribosomal subunit, where it forms part of the central protuberance. In the 70S ribosome it contacts protein S13 of the 30S subunit (bridge B1b), connecting the 2 subunits; this bridge is implicated in subunit movement. Contacts the P site tRNA; the 5S rRNA and some of its associated proteins might help stabilize positioning of ribosome-bound tRNAs.</text>
</comment>
<comment type="subunit">
    <text evidence="1">Part of the 50S ribosomal subunit; part of the 5S rRNA/L5/L18/L25 subcomplex. Contacts the 5S rRNA and the P site tRNA. Forms a bridge to the 30S subunit in the 70S ribosome.</text>
</comment>
<comment type="similarity">
    <text evidence="1">Belongs to the universal ribosomal protein uL5 family.</text>
</comment>
<name>RL5_HERAR</name>
<evidence type="ECO:0000255" key="1">
    <source>
        <dbReference type="HAMAP-Rule" id="MF_01333"/>
    </source>
</evidence>
<evidence type="ECO:0000305" key="2"/>
<dbReference type="EMBL" id="CU207211">
    <property type="protein sequence ID" value="CAL63263.1"/>
    <property type="molecule type" value="Genomic_DNA"/>
</dbReference>
<dbReference type="SMR" id="A4G9S6"/>
<dbReference type="STRING" id="204773.HEAR3154"/>
<dbReference type="KEGG" id="har:HEAR3154"/>
<dbReference type="eggNOG" id="COG0094">
    <property type="taxonomic scope" value="Bacteria"/>
</dbReference>
<dbReference type="HOGENOM" id="CLU_061015_2_1_4"/>
<dbReference type="OrthoDB" id="9806626at2"/>
<dbReference type="Proteomes" id="UP000006697">
    <property type="component" value="Chromosome"/>
</dbReference>
<dbReference type="GO" id="GO:1990904">
    <property type="term" value="C:ribonucleoprotein complex"/>
    <property type="evidence" value="ECO:0007669"/>
    <property type="project" value="UniProtKB-KW"/>
</dbReference>
<dbReference type="GO" id="GO:0005840">
    <property type="term" value="C:ribosome"/>
    <property type="evidence" value="ECO:0007669"/>
    <property type="project" value="UniProtKB-KW"/>
</dbReference>
<dbReference type="GO" id="GO:0019843">
    <property type="term" value="F:rRNA binding"/>
    <property type="evidence" value="ECO:0007669"/>
    <property type="project" value="UniProtKB-UniRule"/>
</dbReference>
<dbReference type="GO" id="GO:0003735">
    <property type="term" value="F:structural constituent of ribosome"/>
    <property type="evidence" value="ECO:0007669"/>
    <property type="project" value="InterPro"/>
</dbReference>
<dbReference type="GO" id="GO:0000049">
    <property type="term" value="F:tRNA binding"/>
    <property type="evidence" value="ECO:0007669"/>
    <property type="project" value="UniProtKB-UniRule"/>
</dbReference>
<dbReference type="GO" id="GO:0006412">
    <property type="term" value="P:translation"/>
    <property type="evidence" value="ECO:0007669"/>
    <property type="project" value="UniProtKB-UniRule"/>
</dbReference>
<dbReference type="FunFam" id="3.30.1440.10:FF:000001">
    <property type="entry name" value="50S ribosomal protein L5"/>
    <property type="match status" value="1"/>
</dbReference>
<dbReference type="Gene3D" id="3.30.1440.10">
    <property type="match status" value="1"/>
</dbReference>
<dbReference type="HAMAP" id="MF_01333_B">
    <property type="entry name" value="Ribosomal_uL5_B"/>
    <property type="match status" value="1"/>
</dbReference>
<dbReference type="InterPro" id="IPR002132">
    <property type="entry name" value="Ribosomal_uL5"/>
</dbReference>
<dbReference type="InterPro" id="IPR020930">
    <property type="entry name" value="Ribosomal_uL5_bac-type"/>
</dbReference>
<dbReference type="InterPro" id="IPR031309">
    <property type="entry name" value="Ribosomal_uL5_C"/>
</dbReference>
<dbReference type="InterPro" id="IPR020929">
    <property type="entry name" value="Ribosomal_uL5_CS"/>
</dbReference>
<dbReference type="InterPro" id="IPR022803">
    <property type="entry name" value="Ribosomal_uL5_dom_sf"/>
</dbReference>
<dbReference type="InterPro" id="IPR031310">
    <property type="entry name" value="Ribosomal_uL5_N"/>
</dbReference>
<dbReference type="NCBIfam" id="NF000585">
    <property type="entry name" value="PRK00010.1"/>
    <property type="match status" value="1"/>
</dbReference>
<dbReference type="PANTHER" id="PTHR11994">
    <property type="entry name" value="60S RIBOSOMAL PROTEIN L11-RELATED"/>
    <property type="match status" value="1"/>
</dbReference>
<dbReference type="Pfam" id="PF00281">
    <property type="entry name" value="Ribosomal_L5"/>
    <property type="match status" value="1"/>
</dbReference>
<dbReference type="Pfam" id="PF00673">
    <property type="entry name" value="Ribosomal_L5_C"/>
    <property type="match status" value="1"/>
</dbReference>
<dbReference type="PIRSF" id="PIRSF002161">
    <property type="entry name" value="Ribosomal_L5"/>
    <property type="match status" value="1"/>
</dbReference>
<dbReference type="SUPFAM" id="SSF55282">
    <property type="entry name" value="RL5-like"/>
    <property type="match status" value="1"/>
</dbReference>
<dbReference type="PROSITE" id="PS00358">
    <property type="entry name" value="RIBOSOMAL_L5"/>
    <property type="match status" value="1"/>
</dbReference>
<gene>
    <name evidence="1" type="primary">rplE</name>
    <name type="ordered locus">HEAR3154</name>
</gene>
<protein>
    <recommendedName>
        <fullName evidence="1">Large ribosomal subunit protein uL5</fullName>
    </recommendedName>
    <alternativeName>
        <fullName evidence="2">50S ribosomal protein L5</fullName>
    </alternativeName>
</protein>
<proteinExistence type="inferred from homology"/>
<organism>
    <name type="scientific">Herminiimonas arsenicoxydans</name>
    <dbReference type="NCBI Taxonomy" id="204773"/>
    <lineage>
        <taxon>Bacteria</taxon>
        <taxon>Pseudomonadati</taxon>
        <taxon>Pseudomonadota</taxon>
        <taxon>Betaproteobacteria</taxon>
        <taxon>Burkholderiales</taxon>
        <taxon>Oxalobacteraceae</taxon>
        <taxon>Herminiimonas</taxon>
    </lineage>
</organism>